<accession>A6TGN6</accession>
<comment type="function">
    <text evidence="1">Binds directly to 23S rRNA. The L1 stalk is quite mobile in the ribosome, and is involved in E site tRNA release.</text>
</comment>
<comment type="function">
    <text evidence="1">Protein L1 is also a translational repressor protein, it controls the translation of the L11 operon by binding to its mRNA.</text>
</comment>
<comment type="subunit">
    <text evidence="1">Part of the 50S ribosomal subunit.</text>
</comment>
<comment type="similarity">
    <text evidence="1">Belongs to the universal ribosomal protein uL1 family.</text>
</comment>
<protein>
    <recommendedName>
        <fullName evidence="1">Large ribosomal subunit protein uL1</fullName>
    </recommendedName>
    <alternativeName>
        <fullName evidence="2">50S ribosomal protein L1</fullName>
    </alternativeName>
</protein>
<proteinExistence type="inferred from homology"/>
<name>RL1_KLEP7</name>
<evidence type="ECO:0000255" key="1">
    <source>
        <dbReference type="HAMAP-Rule" id="MF_01318"/>
    </source>
</evidence>
<evidence type="ECO:0000305" key="2"/>
<feature type="chain" id="PRO_1000051908" description="Large ribosomal subunit protein uL1">
    <location>
        <begin position="1"/>
        <end position="234"/>
    </location>
</feature>
<sequence>MAKLTKRMRVIREKVDATKQYDINEAIALLKELATAKFTESVDVAVNLGIDARKSDQNVRGATVLPHGTGRSVRVAVFTQGANAEAAKAAGAELVGMEDLAEQIKKGEMNFDVVIASPDAMRVVGQLGQVLGPRGLMPNPKVGTVTPNVAEAVKNAKAGQVRYRNDKNGIIHTTIGKVDFDADKLKENLEALLVALKKAKPTQAKGVYIKKVSISTTMGAGVAVDQAGLNASAN</sequence>
<reference key="1">
    <citation type="submission" date="2006-09" db="EMBL/GenBank/DDBJ databases">
        <authorList>
            <consortium name="The Klebsiella pneumonia Genome Sequencing Project"/>
            <person name="McClelland M."/>
            <person name="Sanderson E.K."/>
            <person name="Spieth J."/>
            <person name="Clifton W.S."/>
            <person name="Latreille P."/>
            <person name="Sabo A."/>
            <person name="Pepin K."/>
            <person name="Bhonagiri V."/>
            <person name="Porwollik S."/>
            <person name="Ali J."/>
            <person name="Wilson R.K."/>
        </authorList>
    </citation>
    <scope>NUCLEOTIDE SEQUENCE [LARGE SCALE GENOMIC DNA]</scope>
    <source>
        <strain>ATCC 700721 / MGH 78578</strain>
    </source>
</reference>
<gene>
    <name evidence="1" type="primary">rplA</name>
    <name type="ordered locus">KPN78578_42960</name>
    <name type="ORF">KPN_04361</name>
</gene>
<dbReference type="EMBL" id="CP000647">
    <property type="protein sequence ID" value="ABR79720.1"/>
    <property type="molecule type" value="Genomic_DNA"/>
</dbReference>
<dbReference type="RefSeq" id="WP_002884036.1">
    <property type="nucleotide sequence ID" value="NC_009648.1"/>
</dbReference>
<dbReference type="SMR" id="A6TGN6"/>
<dbReference type="STRING" id="272620.KPN_04361"/>
<dbReference type="jPOST" id="A6TGN6"/>
<dbReference type="PaxDb" id="272620-KPN_04361"/>
<dbReference type="EnsemblBacteria" id="ABR79720">
    <property type="protein sequence ID" value="ABR79720"/>
    <property type="gene ID" value="KPN_04361"/>
</dbReference>
<dbReference type="GeneID" id="93251709"/>
<dbReference type="KEGG" id="kpn:KPN_04361"/>
<dbReference type="HOGENOM" id="CLU_062853_0_0_6"/>
<dbReference type="Proteomes" id="UP000000265">
    <property type="component" value="Chromosome"/>
</dbReference>
<dbReference type="GO" id="GO:0022625">
    <property type="term" value="C:cytosolic large ribosomal subunit"/>
    <property type="evidence" value="ECO:0007669"/>
    <property type="project" value="TreeGrafter"/>
</dbReference>
<dbReference type="GO" id="GO:0019843">
    <property type="term" value="F:rRNA binding"/>
    <property type="evidence" value="ECO:0007669"/>
    <property type="project" value="UniProtKB-UniRule"/>
</dbReference>
<dbReference type="GO" id="GO:0003735">
    <property type="term" value="F:structural constituent of ribosome"/>
    <property type="evidence" value="ECO:0007669"/>
    <property type="project" value="InterPro"/>
</dbReference>
<dbReference type="GO" id="GO:0000049">
    <property type="term" value="F:tRNA binding"/>
    <property type="evidence" value="ECO:0007669"/>
    <property type="project" value="UniProtKB-KW"/>
</dbReference>
<dbReference type="GO" id="GO:0006417">
    <property type="term" value="P:regulation of translation"/>
    <property type="evidence" value="ECO:0007669"/>
    <property type="project" value="UniProtKB-KW"/>
</dbReference>
<dbReference type="GO" id="GO:0006412">
    <property type="term" value="P:translation"/>
    <property type="evidence" value="ECO:0007669"/>
    <property type="project" value="UniProtKB-UniRule"/>
</dbReference>
<dbReference type="CDD" id="cd00403">
    <property type="entry name" value="Ribosomal_L1"/>
    <property type="match status" value="1"/>
</dbReference>
<dbReference type="FunFam" id="3.40.50.790:FF:000001">
    <property type="entry name" value="50S ribosomal protein L1"/>
    <property type="match status" value="1"/>
</dbReference>
<dbReference type="Gene3D" id="3.30.190.20">
    <property type="match status" value="1"/>
</dbReference>
<dbReference type="Gene3D" id="3.40.50.790">
    <property type="match status" value="1"/>
</dbReference>
<dbReference type="HAMAP" id="MF_01318_B">
    <property type="entry name" value="Ribosomal_uL1_B"/>
    <property type="match status" value="1"/>
</dbReference>
<dbReference type="InterPro" id="IPR005878">
    <property type="entry name" value="Ribosom_uL1_bac-type"/>
</dbReference>
<dbReference type="InterPro" id="IPR002143">
    <property type="entry name" value="Ribosomal_uL1"/>
</dbReference>
<dbReference type="InterPro" id="IPR023674">
    <property type="entry name" value="Ribosomal_uL1-like"/>
</dbReference>
<dbReference type="InterPro" id="IPR028364">
    <property type="entry name" value="Ribosomal_uL1/biogenesis"/>
</dbReference>
<dbReference type="InterPro" id="IPR016095">
    <property type="entry name" value="Ribosomal_uL1_3-a/b-sand"/>
</dbReference>
<dbReference type="InterPro" id="IPR023673">
    <property type="entry name" value="Ribosomal_uL1_CS"/>
</dbReference>
<dbReference type="NCBIfam" id="TIGR01169">
    <property type="entry name" value="rplA_bact"/>
    <property type="match status" value="1"/>
</dbReference>
<dbReference type="PANTHER" id="PTHR36427">
    <property type="entry name" value="54S RIBOSOMAL PROTEIN L1, MITOCHONDRIAL"/>
    <property type="match status" value="1"/>
</dbReference>
<dbReference type="PANTHER" id="PTHR36427:SF3">
    <property type="entry name" value="LARGE RIBOSOMAL SUBUNIT PROTEIN UL1M"/>
    <property type="match status" value="1"/>
</dbReference>
<dbReference type="Pfam" id="PF00687">
    <property type="entry name" value="Ribosomal_L1"/>
    <property type="match status" value="1"/>
</dbReference>
<dbReference type="PIRSF" id="PIRSF002155">
    <property type="entry name" value="Ribosomal_L1"/>
    <property type="match status" value="1"/>
</dbReference>
<dbReference type="SUPFAM" id="SSF56808">
    <property type="entry name" value="Ribosomal protein L1"/>
    <property type="match status" value="1"/>
</dbReference>
<dbReference type="PROSITE" id="PS01199">
    <property type="entry name" value="RIBOSOMAL_L1"/>
    <property type="match status" value="1"/>
</dbReference>
<keyword id="KW-0678">Repressor</keyword>
<keyword id="KW-0687">Ribonucleoprotein</keyword>
<keyword id="KW-0689">Ribosomal protein</keyword>
<keyword id="KW-0694">RNA-binding</keyword>
<keyword id="KW-0699">rRNA-binding</keyword>
<keyword id="KW-0810">Translation regulation</keyword>
<keyword id="KW-0820">tRNA-binding</keyword>
<organism>
    <name type="scientific">Klebsiella pneumoniae subsp. pneumoniae (strain ATCC 700721 / MGH 78578)</name>
    <dbReference type="NCBI Taxonomy" id="272620"/>
    <lineage>
        <taxon>Bacteria</taxon>
        <taxon>Pseudomonadati</taxon>
        <taxon>Pseudomonadota</taxon>
        <taxon>Gammaproteobacteria</taxon>
        <taxon>Enterobacterales</taxon>
        <taxon>Enterobacteriaceae</taxon>
        <taxon>Klebsiella/Raoultella group</taxon>
        <taxon>Klebsiella</taxon>
        <taxon>Klebsiella pneumoniae complex</taxon>
    </lineage>
</organism>